<protein>
    <recommendedName>
        <fullName>Uncharacterized protein ORF28</fullName>
    </recommendedName>
</protein>
<proteinExistence type="predicted"/>
<organismHost>
    <name type="scientific">Ictaluridae</name>
    <name type="common">bullhead catfishes</name>
    <dbReference type="NCBI Taxonomy" id="7996"/>
</organismHost>
<sequence length="590" mass="64337">MSLPGGRGTVKIETRERIWVRRVNGETGVYDTRAGSFETVSCQEFEAAADTVPSVPVFCDRCFGTSLYEVPLTGFGTFVVGTCCIFSPGDPVDDPSIPAHMRKYQQPIEAHQTMVQVAPGTLKYSHQIPMGKVLGYWHVHMEDRVYLNMIGGIDESEDTGKRCVETFTEADIPCALSLGTLDVGLNEVILECSVVVIPARRGCHAKLFTRDTVSDGLEKFCFQSHATLPPTLLASFGSTSESPERKTFYEAHVDALNNYIKLLRTIYSHKGETEIEQYLIEGSKLYSELIGEPSRVLDATMKAAQIAEPQTHTGGADRQRPQRPDGIPYSVPDRFPMTGYPFAPQFCGDPGLVSHYNPFVPPQSFGQGYGPERVGGYYPQPPNPYVLPISYGQQPYPGHPQPHGHHQQRSGGGDLKAELIETLGLAPKTNAVQESLKSFISEILESELKNCGIKRAAGNIERNCDVDEEPPRTKRARPEPKTAVEAIVRAPYGDFDSTALTTKIGQVSDTVEKLNKVIETLLTQSSAQPAPLSTPAQAAPVQPSLPQPVPEPLAPQEPPPPGTSAPTLEASLPQQKPVVSKGAFETLMNL</sequence>
<organism>
    <name type="scientific">Ictalurid herpesvirus 1 (strain Auburn)</name>
    <name type="common">IcHV-1</name>
    <name type="synonym">Channel catfish herpesvirus</name>
    <dbReference type="NCBI Taxonomy" id="766178"/>
    <lineage>
        <taxon>Viruses</taxon>
        <taxon>Duplodnaviria</taxon>
        <taxon>Heunggongvirae</taxon>
        <taxon>Peploviricota</taxon>
        <taxon>Herviviricetes</taxon>
        <taxon>Herpesvirales</taxon>
        <taxon>Alloherpesviridae</taxon>
        <taxon>Ictavirus</taxon>
        <taxon>Ictavirus ictaluridallo1</taxon>
        <taxon>Ictalurid herpesvirus 1</taxon>
    </lineage>
</organism>
<name>VG28_ICHVA</name>
<reference key="1">
    <citation type="journal article" date="1992" name="Virology">
        <title>Channel catfish virus: a new type of herpesvirus.</title>
        <authorList>
            <person name="Davison A.J."/>
        </authorList>
    </citation>
    <scope>NUCLEOTIDE SEQUENCE [LARGE SCALE GENOMIC DNA]</scope>
</reference>
<evidence type="ECO:0000256" key="1">
    <source>
        <dbReference type="SAM" id="MobiDB-lite"/>
    </source>
</evidence>
<accession>Q00131</accession>
<gene>
    <name type="primary">ORF28</name>
</gene>
<keyword id="KW-1185">Reference proteome</keyword>
<dbReference type="EMBL" id="M75136">
    <property type="protein sequence ID" value="AAA88131.1"/>
    <property type="molecule type" value="Genomic_DNA"/>
</dbReference>
<dbReference type="PIR" id="B36789">
    <property type="entry name" value="B36789"/>
</dbReference>
<dbReference type="RefSeq" id="NP_041119.1">
    <property type="nucleotide sequence ID" value="NC_001493.2"/>
</dbReference>
<dbReference type="GeneID" id="1488417"/>
<dbReference type="KEGG" id="vg:1488417"/>
<dbReference type="Proteomes" id="UP000007643">
    <property type="component" value="Segment"/>
</dbReference>
<feature type="chain" id="PRO_0000222110" description="Uncharacterized protein ORF28">
    <location>
        <begin position="1"/>
        <end position="590"/>
    </location>
</feature>
<feature type="region of interest" description="Disordered" evidence="1">
    <location>
        <begin position="306"/>
        <end position="329"/>
    </location>
</feature>
<feature type="region of interest" description="Disordered" evidence="1">
    <location>
        <begin position="528"/>
        <end position="590"/>
    </location>
</feature>
<feature type="compositionally biased region" description="Pro residues" evidence="1">
    <location>
        <begin position="543"/>
        <end position="563"/>
    </location>
</feature>